<proteinExistence type="evidence at protein level"/>
<gene>
    <name type="primary">Nsmf</name>
    <name type="synonym">Jac</name>
    <name type="synonym">Nelf</name>
</gene>
<feature type="initiator methionine" description="Removed">
    <location>
        <position position="1"/>
    </location>
</feature>
<feature type="chain" id="PRO_0000096780" description="NMDA receptor synaptonuclear signaling and neuronal migration factor">
    <location>
        <begin position="2"/>
        <end position="532"/>
    </location>
</feature>
<feature type="region of interest" description="Necessary and sufficient to elicit dendritic processes and synaptic contacts">
    <location>
        <begin position="2"/>
        <end position="235"/>
    </location>
</feature>
<feature type="region of interest" description="Disordered" evidence="3">
    <location>
        <begin position="34"/>
        <end position="67"/>
    </location>
</feature>
<feature type="region of interest" description="Disordered" evidence="3">
    <location>
        <begin position="127"/>
        <end position="174"/>
    </location>
</feature>
<feature type="region of interest" description="Disordered" evidence="3">
    <location>
        <begin position="275"/>
        <end position="315"/>
    </location>
</feature>
<feature type="short sequence motif" description="Nuclear localization signal">
    <location>
        <begin position="247"/>
        <end position="252"/>
    </location>
</feature>
<feature type="compositionally biased region" description="Basic and acidic residues" evidence="3">
    <location>
        <begin position="38"/>
        <end position="48"/>
    </location>
</feature>
<feature type="compositionally biased region" description="Basic residues" evidence="3">
    <location>
        <begin position="127"/>
        <end position="139"/>
    </location>
</feature>
<feature type="compositionally biased region" description="Polar residues" evidence="3">
    <location>
        <begin position="155"/>
        <end position="164"/>
    </location>
</feature>
<feature type="compositionally biased region" description="Basic and acidic residues" evidence="3">
    <location>
        <begin position="302"/>
        <end position="311"/>
    </location>
</feature>
<feature type="modified residue" description="Phosphoserine" evidence="2">
    <location>
        <position position="206"/>
    </location>
</feature>
<feature type="modified residue" description="Phosphoserine" evidence="11">
    <location>
        <position position="292"/>
    </location>
</feature>
<feature type="modified residue" description="Phosphoserine" evidence="11">
    <location>
        <position position="294"/>
    </location>
</feature>
<feature type="lipid moiety-binding region" description="N-myristoyl glycine" evidence="5">
    <location>
        <position position="2"/>
    </location>
</feature>
<feature type="splice variant" id="VSP_014770" description="In isoform 3." evidence="9">
    <location>
        <begin position="238"/>
        <end position="262"/>
    </location>
</feature>
<feature type="splice variant" id="VSP_014771" description="In isoform 2 and isoform 4." evidence="8">
    <location>
        <begin position="240"/>
        <end position="262"/>
    </location>
</feature>
<feature type="splice variant" id="VSP_014772" description="In isoform 4." evidence="8">
    <location>
        <begin position="280"/>
        <end position="309"/>
    </location>
</feature>
<feature type="splice variant" id="VSP_014773" description="In isoform 5." evidence="9">
    <original>SSDLQSSHCTLDEACEDLDWDTEKGLE</original>
    <variation>TNLLQGAQGRVHPNHHPQRRPIHHPHP</variation>
    <location>
        <begin position="310"/>
        <end position="336"/>
    </location>
</feature>
<feature type="splice variant" id="VSP_014774" description="In isoform 5." evidence="9">
    <location>
        <begin position="337"/>
        <end position="532"/>
    </location>
</feature>
<feature type="mutagenesis site" description="Exclusive nuclear localization. Shows a reduction in synaptic contacts and dendritic processes." evidence="5">
    <original>G</original>
    <variation>A</variation>
    <location>
        <position position="2"/>
    </location>
</feature>
<feature type="mutagenesis site" description="Loss of CABP1 binding." evidence="5">
    <original>F</original>
    <variation>E</variation>
    <location>
        <position position="241"/>
    </location>
</feature>
<feature type="mutagenesis site" description="Extranuclear localization and reduced CABP1 and KPNA1 binding. Shows a reduction in synaptic contacts and dendritic processes." evidence="5">
    <location>
        <begin position="247"/>
        <end position="252"/>
    </location>
</feature>
<feature type="mutagenesis site" description="No effect on CABP1 binding." evidence="5">
    <original>IQ</original>
    <variation>GG</variation>
    <location>
        <begin position="260"/>
        <end position="261"/>
    </location>
</feature>
<feature type="sequence conflict" description="In Ref. 3; AAH87719." evidence="10" ref="3">
    <original>K</original>
    <variation>Q</variation>
    <location>
        <position position="174"/>
    </location>
</feature>
<keyword id="KW-0025">Alternative splicing</keyword>
<keyword id="KW-1003">Cell membrane</keyword>
<keyword id="KW-0966">Cell projection</keyword>
<keyword id="KW-0963">Cytoplasm</keyword>
<keyword id="KW-0206">Cytoskeleton</keyword>
<keyword id="KW-0449">Lipoprotein</keyword>
<keyword id="KW-0472">Membrane</keyword>
<keyword id="KW-0519">Myristate</keyword>
<keyword id="KW-0539">Nucleus</keyword>
<keyword id="KW-0597">Phosphoprotein</keyword>
<keyword id="KW-1185">Reference proteome</keyword>
<keyword id="KW-0770">Synapse</keyword>
<keyword id="KW-0771">Synaptosome</keyword>
<reference key="1">
    <citation type="submission" date="2000-08" db="EMBL/GenBank/DDBJ databases">
        <title>Characterization of the novel brain-specific protein Jacob.</title>
        <authorList>
            <person name="Hoffmann B."/>
            <person name="Seidenbecher C.I."/>
            <person name="Kreutz M.R."/>
        </authorList>
    </citation>
    <scope>NUCLEOTIDE SEQUENCE [MRNA] (ISOFORMS 1; 2 AND 4)</scope>
    <source>
        <strain>Sprague-Dawley</strain>
        <tissue>Brain</tissue>
    </source>
</reference>
<reference key="2">
    <citation type="submission" date="2002-12" db="EMBL/GenBank/DDBJ databases">
        <title>Cloning and functional characterization of jacob: - Juxtasynaptic attractor of caldendrin on dendritic boutons.</title>
        <authorList>
            <person name="Dieterich D.C."/>
            <person name="Landwehr M."/>
            <person name="Hoffmann B."/>
            <person name="Seidenbecher C.I."/>
            <person name="Kreutz M."/>
            <person name="Richter K."/>
            <person name="Smalla K.H."/>
            <person name="Dresbach T."/>
            <person name="Zuschratter W."/>
            <person name="Boeckers T.M."/>
            <person name="Gundelfinger E.D."/>
            <person name="Kreutz M.R."/>
        </authorList>
    </citation>
    <scope>NUCLEOTIDE SEQUENCE [MRNA] (ISOFORMS 3 AND 5)</scope>
    <source>
        <strain>Wistar</strain>
        <tissue>Hippocampus</tissue>
    </source>
</reference>
<reference key="3">
    <citation type="journal article" date="2004" name="Genome Res.">
        <title>The status, quality, and expansion of the NIH full-length cDNA project: the Mammalian Gene Collection (MGC).</title>
        <authorList>
            <consortium name="The MGC Project Team"/>
        </authorList>
    </citation>
    <scope>NUCLEOTIDE SEQUENCE [LARGE SCALE MRNA] (ISOFORM 1)</scope>
    <source>
        <tissue>Brain</tissue>
    </source>
</reference>
<reference key="4">
    <citation type="journal article" date="2001" name="Gene Expr. Patterns">
        <title>Nasal embryonic LHRH factor (NELF) expression within the CNS and PNS of the rodent.</title>
        <authorList>
            <person name="Kramer P.R."/>
            <person name="Wray S."/>
        </authorList>
    </citation>
    <scope>TISSUE SPECIFICITY</scope>
</reference>
<reference key="5">
    <citation type="journal article" date="2008" name="PLoS Biol.">
        <title>Caldendrin-Jacob: a protein liaison that couples NMDA receptor signalling to the nucleus.</title>
        <authorList>
            <person name="Dieterich D.C."/>
            <person name="Karpova A."/>
            <person name="Mikhaylova M."/>
            <person name="Zdobnova I."/>
            <person name="Konig I."/>
            <person name="Landwehr M."/>
            <person name="Kreutz M."/>
            <person name="Smalla K.H."/>
            <person name="Richter K."/>
            <person name="Landgraf P."/>
            <person name="Reissner C."/>
            <person name="Boeckers T.M."/>
            <person name="Zuschratter W."/>
            <person name="Spilker C."/>
            <person name="Seidenbecher C.I."/>
            <person name="Garner C.C."/>
            <person name="Gundelfinger E.D."/>
            <person name="Kreutz M.R."/>
        </authorList>
    </citation>
    <scope>FUNCTION</scope>
    <scope>INTERACTION WITH CABP1 AND KPNA1</scope>
    <scope>MYRISTOYLATION AT GLY-2</scope>
    <scope>SUBCELLULAR LOCATION</scope>
    <scope>MUTAGENESIS OF GLY-2; PHE-241; 247-ARG--ARG-252 AND 260-ILE-GLN-261</scope>
    <scope>TISSUE SPECIFICITY</scope>
</reference>
<reference key="6">
    <citation type="journal article" date="2009" name="J. Biol. Chem.">
        <title>Dendritic mRNA targeting of Jacob and N-methyl-d-aspartate-induced nuclear translocation after calpain-mediated proteolysis.</title>
        <authorList>
            <person name="Kindler S."/>
            <person name="Dieterich D.C."/>
            <person name="Schutt J."/>
            <person name="Sahin J."/>
            <person name="Karpova A."/>
            <person name="Mikhaylova M."/>
            <person name="Schob C."/>
            <person name="Gundelfinger E.D."/>
            <person name="Kreienkamp H.J."/>
            <person name="Kreutz M.R."/>
        </authorList>
    </citation>
    <scope>PROTEOLYTIC PROCESSING</scope>
    <scope>ALTERNATIVE SPLICING</scope>
    <scope>SUBCELLULAR LOCATION</scope>
    <scope>TISSUE SPECIFICITY</scope>
</reference>
<reference key="7">
    <citation type="journal article" date="2011" name="PLoS ONE">
        <title>Nuclear translocation of jacob in hippocampal neurons after stimuli inducing long-term potentiation but not long-term depression.</title>
        <authorList>
            <person name="Behnisch T."/>
            <person name="Yuanxiang P."/>
            <person name="Bethge P."/>
            <person name="Parvez S."/>
            <person name="Chen Y."/>
            <person name="Yu J."/>
            <person name="Karpova A."/>
            <person name="Frey J.U."/>
            <person name="Mikhaylova M."/>
            <person name="Kreutz M.R."/>
        </authorList>
    </citation>
    <scope>SUBCELLULAR LOCATION</scope>
    <scope>TISSUE SPECIFICITY</scope>
</reference>
<reference key="8">
    <citation type="journal article" date="2012" name="Nat. Commun.">
        <title>Quantitative maps of protein phosphorylation sites across 14 different rat organs and tissues.</title>
        <authorList>
            <person name="Lundby A."/>
            <person name="Secher A."/>
            <person name="Lage K."/>
            <person name="Nordsborg N.B."/>
            <person name="Dmytriyev A."/>
            <person name="Lundby C."/>
            <person name="Olsen J.V."/>
        </authorList>
    </citation>
    <scope>PHOSPHORYLATION [LARGE SCALE ANALYSIS] AT SER-292 AND SER-294</scope>
    <scope>IDENTIFICATION BY MASS SPECTROMETRY [LARGE SCALE ANALYSIS]</scope>
</reference>
<protein>
    <recommendedName>
        <fullName>NMDA receptor synaptonuclear signaling and neuronal migration factor</fullName>
    </recommendedName>
    <alternativeName>
        <fullName>Juxtasynaptic attractor of caldendrin on dendritic boutons protein</fullName>
        <shortName>Jacob protein</shortName>
    </alternativeName>
    <alternativeName>
        <fullName>Nasal embryonic luteinizing hormone-releasing hormone factor</fullName>
        <shortName>Nasal embryonic LHRH factor</shortName>
    </alternativeName>
</protein>
<dbReference type="EMBL" id="AJ293697">
    <property type="protein sequence ID" value="CAC20866.1"/>
    <property type="molecule type" value="mRNA"/>
</dbReference>
<dbReference type="EMBL" id="AJ293698">
    <property type="protein sequence ID" value="CAC20867.1"/>
    <property type="molecule type" value="mRNA"/>
</dbReference>
<dbReference type="EMBL" id="AJ293699">
    <property type="protein sequence ID" value="CAC20868.1"/>
    <property type="molecule type" value="mRNA"/>
</dbReference>
<dbReference type="EMBL" id="AJ534640">
    <property type="protein sequence ID" value="CAD58977.1"/>
    <property type="molecule type" value="mRNA"/>
</dbReference>
<dbReference type="EMBL" id="AJ534642">
    <property type="protein sequence ID" value="CAD58979.1"/>
    <property type="molecule type" value="mRNA"/>
</dbReference>
<dbReference type="EMBL" id="BC087719">
    <property type="protein sequence ID" value="AAH87719.1"/>
    <property type="molecule type" value="mRNA"/>
</dbReference>
<dbReference type="RefSeq" id="NP_001257555.1">
    <property type="nucleotide sequence ID" value="NM_001270626.1"/>
</dbReference>
<dbReference type="RefSeq" id="NP_001257556.1">
    <property type="nucleotide sequence ID" value="NM_001270627.1"/>
</dbReference>
<dbReference type="RefSeq" id="NP_001257557.1">
    <property type="nucleotide sequence ID" value="NM_001270628.1"/>
</dbReference>
<dbReference type="RefSeq" id="NP_476538.2">
    <property type="nucleotide sequence ID" value="NM_057190.2"/>
</dbReference>
<dbReference type="SMR" id="Q9EPI6"/>
<dbReference type="BioGRID" id="250751">
    <property type="interactions" value="3"/>
</dbReference>
<dbReference type="FunCoup" id="Q9EPI6">
    <property type="interactions" value="440"/>
</dbReference>
<dbReference type="IntAct" id="Q9EPI6">
    <property type="interactions" value="7"/>
</dbReference>
<dbReference type="MINT" id="Q9EPI6"/>
<dbReference type="STRING" id="10116.ENSRNOP00000045393"/>
<dbReference type="iPTMnet" id="Q9EPI6"/>
<dbReference type="PhosphoSitePlus" id="Q9EPI6"/>
<dbReference type="PaxDb" id="10116-ENSRNOP00000058016"/>
<dbReference type="GeneID" id="117536"/>
<dbReference type="KEGG" id="rno:117536"/>
<dbReference type="UCSC" id="RGD:619819">
    <molecule id="Q9EPI6-1"/>
    <property type="organism name" value="rat"/>
</dbReference>
<dbReference type="AGR" id="RGD:619819"/>
<dbReference type="CTD" id="26012"/>
<dbReference type="RGD" id="619819">
    <property type="gene designation" value="Nsmf"/>
</dbReference>
<dbReference type="eggNOG" id="ENOG502QRME">
    <property type="taxonomic scope" value="Eukaryota"/>
</dbReference>
<dbReference type="InParanoid" id="Q9EPI6"/>
<dbReference type="OrthoDB" id="41830at9989"/>
<dbReference type="PhylomeDB" id="Q9EPI6"/>
<dbReference type="TreeFam" id="TF331286"/>
<dbReference type="PRO" id="PR:Q9EPI6"/>
<dbReference type="Proteomes" id="UP000002494">
    <property type="component" value="Unplaced"/>
</dbReference>
<dbReference type="GO" id="GO:0097440">
    <property type="term" value="C:apical dendrite"/>
    <property type="evidence" value="ECO:0000314"/>
    <property type="project" value="UniProtKB"/>
</dbReference>
<dbReference type="GO" id="GO:0030863">
    <property type="term" value="C:cortical cytoskeleton"/>
    <property type="evidence" value="ECO:0000314"/>
    <property type="project" value="UniProtKB"/>
</dbReference>
<dbReference type="GO" id="GO:0005737">
    <property type="term" value="C:cytoplasm"/>
    <property type="evidence" value="ECO:0000250"/>
    <property type="project" value="UniProtKB"/>
</dbReference>
<dbReference type="GO" id="GO:0030425">
    <property type="term" value="C:dendrite"/>
    <property type="evidence" value="ECO:0000314"/>
    <property type="project" value="UniProtKB"/>
</dbReference>
<dbReference type="GO" id="GO:0000791">
    <property type="term" value="C:euchromatin"/>
    <property type="evidence" value="ECO:0000314"/>
    <property type="project" value="UniProtKB"/>
</dbReference>
<dbReference type="GO" id="GO:0098978">
    <property type="term" value="C:glutamatergic synapse"/>
    <property type="evidence" value="ECO:0000314"/>
    <property type="project" value="SynGO"/>
</dbReference>
<dbReference type="GO" id="GO:0016020">
    <property type="term" value="C:membrane"/>
    <property type="evidence" value="ECO:0000314"/>
    <property type="project" value="UniProtKB"/>
</dbReference>
<dbReference type="GO" id="GO:0043005">
    <property type="term" value="C:neuron projection"/>
    <property type="evidence" value="ECO:0000314"/>
    <property type="project" value="UniProtKB"/>
</dbReference>
<dbReference type="GO" id="GO:0005635">
    <property type="term" value="C:nuclear envelope"/>
    <property type="evidence" value="ECO:0000314"/>
    <property type="project" value="UniProtKB"/>
</dbReference>
<dbReference type="GO" id="GO:0016363">
    <property type="term" value="C:nuclear matrix"/>
    <property type="evidence" value="ECO:0000314"/>
    <property type="project" value="UniProtKB"/>
</dbReference>
<dbReference type="GO" id="GO:0031965">
    <property type="term" value="C:nuclear membrane"/>
    <property type="evidence" value="ECO:0000314"/>
    <property type="project" value="UniProtKB"/>
</dbReference>
<dbReference type="GO" id="GO:0005634">
    <property type="term" value="C:nucleus"/>
    <property type="evidence" value="ECO:0000314"/>
    <property type="project" value="UniProtKB"/>
</dbReference>
<dbReference type="GO" id="GO:0043204">
    <property type="term" value="C:perikaryon"/>
    <property type="evidence" value="ECO:0000314"/>
    <property type="project" value="UniProtKB"/>
</dbReference>
<dbReference type="GO" id="GO:0005886">
    <property type="term" value="C:plasma membrane"/>
    <property type="evidence" value="ECO:0007669"/>
    <property type="project" value="UniProtKB-SubCell"/>
</dbReference>
<dbReference type="GO" id="GO:0098794">
    <property type="term" value="C:postsynapse"/>
    <property type="evidence" value="ECO:0000314"/>
    <property type="project" value="SynGO"/>
</dbReference>
<dbReference type="GO" id="GO:0014069">
    <property type="term" value="C:postsynaptic density"/>
    <property type="evidence" value="ECO:0000314"/>
    <property type="project" value="UniProtKB"/>
</dbReference>
<dbReference type="GO" id="GO:0045202">
    <property type="term" value="C:synapse"/>
    <property type="evidence" value="ECO:0000314"/>
    <property type="project" value="UniProtKB"/>
</dbReference>
<dbReference type="GO" id="GO:0048306">
    <property type="term" value="F:calcium-dependent protein binding"/>
    <property type="evidence" value="ECO:0000314"/>
    <property type="project" value="UniProtKB"/>
</dbReference>
<dbReference type="GO" id="GO:0071230">
    <property type="term" value="P:cellular response to amino acid stimulus"/>
    <property type="evidence" value="ECO:0000314"/>
    <property type="project" value="UniProtKB"/>
</dbReference>
<dbReference type="GO" id="GO:0071257">
    <property type="term" value="P:cellular response to electrical stimulus"/>
    <property type="evidence" value="ECO:0000314"/>
    <property type="project" value="UniProtKB"/>
</dbReference>
<dbReference type="GO" id="GO:0071371">
    <property type="term" value="P:cellular response to gonadotropin stimulus"/>
    <property type="evidence" value="ECO:0000250"/>
    <property type="project" value="UniProtKB"/>
</dbReference>
<dbReference type="GO" id="GO:2001224">
    <property type="term" value="P:positive regulation of neuron migration"/>
    <property type="evidence" value="ECO:0000250"/>
    <property type="project" value="UniProtKB"/>
</dbReference>
<dbReference type="GO" id="GO:0099527">
    <property type="term" value="P:postsynapse to nucleus signaling pathway"/>
    <property type="evidence" value="ECO:0000314"/>
    <property type="project" value="SynGO"/>
</dbReference>
<dbReference type="GO" id="GO:0048814">
    <property type="term" value="P:regulation of dendrite morphogenesis"/>
    <property type="evidence" value="ECO:0000315"/>
    <property type="project" value="UniProtKB"/>
</dbReference>
<dbReference type="GO" id="GO:0043523">
    <property type="term" value="P:regulation of neuron apoptotic process"/>
    <property type="evidence" value="ECO:0000315"/>
    <property type="project" value="UniProtKB"/>
</dbReference>
<dbReference type="GO" id="GO:0048168">
    <property type="term" value="P:regulation of neuronal synaptic plasticity"/>
    <property type="evidence" value="ECO:0000315"/>
    <property type="project" value="UniProtKB"/>
</dbReference>
<dbReference type="Gene3D" id="1.20.5.1190">
    <property type="entry name" value="iswi atpase"/>
    <property type="match status" value="1"/>
</dbReference>
<dbReference type="InterPro" id="IPR033374">
    <property type="entry name" value="NSMF"/>
</dbReference>
<dbReference type="PANTHER" id="PTHR32061">
    <property type="entry name" value="NMDA RECEPTOR SYNAPTONUCLEAR SIGNALING AND NEURONAL MIGRATION FACTOR"/>
    <property type="match status" value="1"/>
</dbReference>
<comment type="function">
    <text evidence="5">Couples NMDA-sensitive glutamate receptor signaling to the nucleus and triggers long-lasting changes in the cytoarchitecture of dendrites and spine synapse processes. Part of the cAMP response element-binding protein (CREB) shut-off signaling pathway. Stimulates outgrowth of olfactory axons and migration of gonadotropin-releasing hormone (GnRH) and luteinizing-hormone-releasing hormone (LHRH) neuronal cells.</text>
</comment>
<comment type="subunit">
    <text evidence="5">Interacts with KPNA1; the interaction occurs in a calcium-independent manner after synaptic NMDA receptor stimulation and is required for nuclear import of NSMF but is competed by CABP1. Interacts (via the central NLS-containing motif region) with CABP1 (via EF-hands 1 and 2); the interaction occurs in a calcium-dependent manner after synaptic NMDA receptor stimulation and prevents the nuclear import of NSMF. Cannot be competed by calmodulin.</text>
</comment>
<comment type="interaction">
    <interactant intactId="EBI-6899705">
        <id>Q9EPI6</id>
    </interactant>
    <interactant intactId="EBI-6899875">
        <id>P23565</id>
        <label>Ina</label>
    </interactant>
    <organismsDiffer>false</organismsDiffer>
    <experiments>5</experiments>
</comment>
<comment type="interaction">
    <interactant intactId="EBI-6899705">
        <id>Q9EPI6</id>
    </interactant>
    <interactant intactId="EBI-73995">
        <id>P27361</id>
        <label>MAPK3</label>
    </interactant>
    <organismsDiffer>true</organismsDiffer>
    <experiments>2</experiments>
</comment>
<comment type="interaction">
    <interactant intactId="EBI-15688762">
        <id>Q9EPI6-1</id>
    </interactant>
    <interactant intactId="EBI-15688755">
        <id>O88751-1</id>
        <label>Cabp1</label>
    </interactant>
    <organismsDiffer>false</organismsDiffer>
    <experiments>4</experiments>
</comment>
<comment type="subcellular location">
    <subcellularLocation>
        <location>Nucleus</location>
    </subcellularLocation>
    <subcellularLocation>
        <location>Nucleus envelope</location>
    </subcellularLocation>
    <subcellularLocation>
        <location>Nucleus membrane</location>
    </subcellularLocation>
    <subcellularLocation>
        <location>Nucleus matrix</location>
    </subcellularLocation>
    <subcellularLocation>
        <location>Cytoplasm</location>
        <location>Cell cortex</location>
    </subcellularLocation>
    <subcellularLocation>
        <location>Cytoplasm</location>
        <location>Cytoskeleton</location>
    </subcellularLocation>
    <subcellularLocation>
        <location>Cell membrane</location>
        <topology>Peripheral membrane protein</topology>
    </subcellularLocation>
    <subcellularLocation>
        <location>Cell projection</location>
        <location>Dendrite</location>
    </subcellularLocation>
    <subcellularLocation>
        <location>Synapse</location>
    </subcellularLocation>
    <subcellularLocation>
        <location>Synapse</location>
        <location>Synaptosome</location>
    </subcellularLocation>
    <subcellularLocation>
        <location>Postsynaptic density</location>
    </subcellularLocation>
    <subcellularLocation>
        <location>Membrane</location>
    </subcellularLocation>
    <text evidence="1">Found on the outside of the luteinizing-hormone-releasing hormone (LHRH) cell membrane and axons projecting from the olfactory pit and epithelium (By similarity). Associates with transcriptionally active chromatin regions. Detected at the nuclear membranes of CA1 neurons. Cortical cytoskeleton. Localized in proximal apical dendrites. Colocalizes with CABP1 in dendrites and dendritic spines. Myristoylation is a prerequisite for extranuclear localization. Translocates from dendrites to the nucleus during NMDA receptor-dependent long-term potentiation (LTP) induction of synaptic transmission at Schaffer collateral/CA1 synapses of hippocampal primary neurons and in an importin-dependent manner.</text>
</comment>
<comment type="alternative products">
    <event type="alternative splicing"/>
    <isoform>
        <id>Q9EPI6-1</id>
        <name>1</name>
        <sequence type="displayed"/>
    </isoform>
    <isoform>
        <id>Q9EPI6-2</id>
        <name>2</name>
        <sequence type="described" ref="VSP_014771"/>
    </isoform>
    <isoform>
        <id>Q9EPI6-3</id>
        <name>3</name>
        <sequence type="described" ref="VSP_014770"/>
    </isoform>
    <isoform>
        <id>Q9EPI6-4</id>
        <name>4</name>
        <sequence type="described" ref="VSP_014771 VSP_014772"/>
    </isoform>
    <isoform>
        <id>Q9EPI6-5</id>
        <name>5</name>
        <sequence type="described" ref="VSP_014773 VSP_014774"/>
    </isoform>
    <text>Additional isoforms seem to exist.</text>
</comment>
<comment type="tissue specificity">
    <text evidence="4 5 6 7">Expressed in the radiatum and pyramidale strata of the hippocampus (at protein level). Strongly expressed in the brain. Expressed in the sensory and motor cortex, hippocampus, olfactory bulb, thalamus and amygdala. In the olfactory bulb expressed in the granular cell layer, mitral cell layer and the glomerular layer. In the hippocampus highly expressed in the regions associated with neuronal cell types as CA1, CA2, CA3 and granule cells of the dentate gyrus. All isoforms have been detected in the molecular layers of the hippocampus (PubMed:19608740).</text>
</comment>
<comment type="PTM">
    <text evidence="6">Proteolytically processed after NMDA receptor activation. Cleaved in a calcium-dependent and calpain-sensitive manner. Calpain cleavage is essential for the translocation process from dendrites to the nucleus.</text>
</comment>
<comment type="miscellaneous">
    <text>NSMF mRNAs expressed in the hippocampus exhibit a prominent dendritic localization which is mediated by a dendritic targeting element (DTE) residing in the 3'-untranslated region (3'UTR). Transport from dendrites to the nucleus is induced by NMDA receptor activation and results in a rapid stripping of synaptic contacts and a reduction of dendritic complexity.</text>
</comment>
<comment type="similarity">
    <text evidence="10">Belongs to the NSMF family.</text>
</comment>
<accession>Q9EPI6</accession>
<accession>Q5PPF6</accession>
<accession>Q7TSC6</accession>
<accession>Q7TSC8</accession>
<accession>Q9EPI4</accession>
<accession>Q9EPI5</accession>
<name>NSMF_RAT</name>
<evidence type="ECO:0000250" key="1"/>
<evidence type="ECO:0000250" key="2">
    <source>
        <dbReference type="UniProtKB" id="Q99NF2"/>
    </source>
</evidence>
<evidence type="ECO:0000256" key="3">
    <source>
        <dbReference type="SAM" id="MobiDB-lite"/>
    </source>
</evidence>
<evidence type="ECO:0000269" key="4">
    <source>
    </source>
</evidence>
<evidence type="ECO:0000269" key="5">
    <source>
    </source>
</evidence>
<evidence type="ECO:0000269" key="6">
    <source>
    </source>
</evidence>
<evidence type="ECO:0000269" key="7">
    <source>
    </source>
</evidence>
<evidence type="ECO:0000303" key="8">
    <source ref="1"/>
</evidence>
<evidence type="ECO:0000303" key="9">
    <source ref="2"/>
</evidence>
<evidence type="ECO:0000305" key="10"/>
<evidence type="ECO:0007744" key="11">
    <source>
    </source>
</evidence>
<sequence length="532" mass="60282">MGAAASRRRALRSEAMSSVAAKVRAARAFGEYLSQSHPENRNGADHLLADAYSGHEGSPEMQPAPHNKRRLSLVSNGRYEGSISDEAVSGKTATEGPQPRVYTISREPALLPGSEAEAIELAVVKGRRQRERHPHHHSQPLRASPGSSREDISRPCQSWAGSRQGSKECPGCAKLVPGPSPRAFGLEQPPLPEASGRHKKLERMYSVDGVSDDVPIRTWFPKENPFSFQTATTTMQAISVFRGYAERKRRKRENDSASVIQRNFRKHLRMVGSRRVKAQTFAERRERSFSRSWSDPTPMKADTSHDSRDSSDLQSSHCTLDEACEDLDWDTEKGLEATACDTEGFLPPKVMLISSKVPKAEYIPTIIRRDDPSIIPILYDHEHATFEDILEEIEKKLNIYHKGAKIWKMLIFCQGGPGHLYLLKNKVATFAKVEKEEDMIHFWKRLSRLMSKVNPEPNVIHIMGCYILGNPNGEKLFQNLRTLMTPYKVTFESPLELSAQGKQMIETYFDFRLYRLWKSRQHSKLLDFDDVL</sequence>
<organism>
    <name type="scientific">Rattus norvegicus</name>
    <name type="common">Rat</name>
    <dbReference type="NCBI Taxonomy" id="10116"/>
    <lineage>
        <taxon>Eukaryota</taxon>
        <taxon>Metazoa</taxon>
        <taxon>Chordata</taxon>
        <taxon>Craniata</taxon>
        <taxon>Vertebrata</taxon>
        <taxon>Euteleostomi</taxon>
        <taxon>Mammalia</taxon>
        <taxon>Eutheria</taxon>
        <taxon>Euarchontoglires</taxon>
        <taxon>Glires</taxon>
        <taxon>Rodentia</taxon>
        <taxon>Myomorpha</taxon>
        <taxon>Muroidea</taxon>
        <taxon>Muridae</taxon>
        <taxon>Murinae</taxon>
        <taxon>Rattus</taxon>
    </lineage>
</organism>